<proteinExistence type="evidence at protein level"/>
<organism>
    <name type="scientific">Arabidopsis thaliana</name>
    <name type="common">Mouse-ear cress</name>
    <dbReference type="NCBI Taxonomy" id="3702"/>
    <lineage>
        <taxon>Eukaryota</taxon>
        <taxon>Viridiplantae</taxon>
        <taxon>Streptophyta</taxon>
        <taxon>Embryophyta</taxon>
        <taxon>Tracheophyta</taxon>
        <taxon>Spermatophyta</taxon>
        <taxon>Magnoliopsida</taxon>
        <taxon>eudicotyledons</taxon>
        <taxon>Gunneridae</taxon>
        <taxon>Pentapetalae</taxon>
        <taxon>rosids</taxon>
        <taxon>malvids</taxon>
        <taxon>Brassicales</taxon>
        <taxon>Brassicaceae</taxon>
        <taxon>Camelineae</taxon>
        <taxon>Arabidopsis</taxon>
    </lineage>
</organism>
<comment type="function">
    <text evidence="4">Aux/IAA proteins are short-lived transcriptional factors that function as repressors of early auxin response genes at low auxin concentrations. Repression is thought to result from the interaction with auxin response factors (ARFs), proteins that bind to the auxin-responsive promoter element (AuxRE). Formation of heterodimers with ARF proteins may alter their ability to modulate early auxin response genes expression.</text>
</comment>
<comment type="subunit">
    <text evidence="1 5">Homodimers and heterodimers (By similarity). Interacts with TPL.</text>
</comment>
<comment type="interaction">
    <interactant intactId="EBI-2295525">
        <id>O24408</id>
    </interactant>
    <interactant intactId="EBI-3946783">
        <id>Q9C5W9</id>
        <label>ARF18</label>
    </interactant>
    <organismsDiffer>false</organismsDiffer>
    <experiments>8</experiments>
</comment>
<comment type="interaction">
    <interactant intactId="EBI-2295525">
        <id>O24408</id>
    </interactant>
    <interactant intactId="EBI-529887">
        <id>Q8RYC8</id>
        <label>ARF19</label>
    </interactant>
    <organismsDiffer>false</organismsDiffer>
    <experiments>5</experiments>
</comment>
<comment type="interaction">
    <interactant intactId="EBI-2295525">
        <id>O24408</id>
    </interactant>
    <interactant intactId="EBI-1799262">
        <id>Q94JM3</id>
        <label>ARF2</label>
    </interactant>
    <organismsDiffer>false</organismsDiffer>
    <experiments>3</experiments>
</comment>
<comment type="interaction">
    <interactant intactId="EBI-2295525">
        <id>O24408</id>
    </interactant>
    <interactant intactId="EBI-632284">
        <id>P93022</id>
        <label>ARF7</label>
    </interactant>
    <organismsDiffer>false</organismsDiffer>
    <experiments>3</experiments>
</comment>
<comment type="interaction">
    <interactant intactId="EBI-2295525">
        <id>O24408</id>
    </interactant>
    <interactant intactId="EBI-446380">
        <id>Q9SQI2</id>
        <label>GI</label>
    </interactant>
    <organismsDiffer>false</organismsDiffer>
    <experiments>3</experiments>
</comment>
<comment type="interaction">
    <interactant intactId="EBI-2295525">
        <id>O24408</id>
    </interactant>
    <interactant intactId="EBI-4457746">
        <id>Q9LV52</id>
        <label>HSFC1</label>
    </interactant>
    <organismsDiffer>false</organismsDiffer>
    <experiments>3</experiments>
</comment>
<comment type="interaction">
    <interactant intactId="EBI-2295525">
        <id>O24408</id>
    </interactant>
    <interactant intactId="EBI-630505">
        <id>P49677</id>
        <label>IAA1</label>
    </interactant>
    <organismsDiffer>false</organismsDiffer>
    <experiments>6</experiments>
</comment>
<comment type="interaction">
    <interactant intactId="EBI-2295525">
        <id>O24408</id>
    </interactant>
    <interactant intactId="EBI-3946434">
        <id>Q38828</id>
        <label>IAA10</label>
    </interactant>
    <organismsDiffer>false</organismsDiffer>
    <experiments>5</experiments>
</comment>
<comment type="interaction">
    <interactant intactId="EBI-2295525">
        <id>O24408</id>
    </interactant>
    <interactant intactId="EBI-617608">
        <id>Q38830</id>
        <label>IAA12</label>
    </interactant>
    <organismsDiffer>false</organismsDiffer>
    <experiments>5</experiments>
</comment>
<comment type="interaction">
    <interactant intactId="EBI-2295525">
        <id>O24408</id>
    </interactant>
    <interactant intactId="EBI-1554143">
        <id>Q38831</id>
        <label>IAA13</label>
    </interactant>
    <organismsDiffer>false</organismsDiffer>
    <experiments>3</experiments>
</comment>
<comment type="interaction">
    <interactant intactId="EBI-2295525">
        <id>O24408</id>
    </interactant>
    <interactant intactId="EBI-25524519">
        <id>A0A2H1ZEF6</id>
        <label>IAA15</label>
    </interactant>
    <organismsDiffer>false</organismsDiffer>
    <experiments>3</experiments>
</comment>
<comment type="interaction">
    <interactant intactId="EBI-2295525">
        <id>O24408</id>
    </interactant>
    <interactant intactId="EBI-632231">
        <id>O24407</id>
        <label>IAA16</label>
    </interactant>
    <organismsDiffer>false</organismsDiffer>
    <experiments>4</experiments>
</comment>
<comment type="interaction">
    <interactant intactId="EBI-2295525">
        <id>O24408</id>
    </interactant>
    <interactant intactId="EBI-632243">
        <id>P93830</id>
        <label>IAA17</label>
    </interactant>
    <organismsDiffer>false</organismsDiffer>
    <experiments>7</experiments>
</comment>
<comment type="interaction">
    <interactant intactId="EBI-2295525">
        <id>O24408</id>
    </interactant>
    <interactant intactId="EBI-632257">
        <id>O24409</id>
        <label>IAA19</label>
    </interactant>
    <organismsDiffer>false</organismsDiffer>
    <experiments>3</experiments>
</comment>
<comment type="interaction">
    <interactant intactId="EBI-2295525">
        <id>O24408</id>
    </interactant>
    <interactant intactId="EBI-632343">
        <id>P49678</id>
        <label>IAA2</label>
    </interactant>
    <organismsDiffer>false</organismsDiffer>
    <experiments>4</experiments>
</comment>
<comment type="interaction">
    <interactant intactId="EBI-2295525">
        <id>O24408</id>
    </interactant>
    <interactant intactId="EBI-632272">
        <id>O24410</id>
        <label>IAA20</label>
    </interactant>
    <organismsDiffer>false</organismsDiffer>
    <experiments>4</experiments>
</comment>
<comment type="interaction">
    <interactant intactId="EBI-2295525">
        <id>O24408</id>
    </interactant>
    <interactant intactId="EBI-3947418">
        <id>Q8LAL2</id>
        <label>IAA26</label>
    </interactant>
    <organismsDiffer>false</organismsDiffer>
    <experiments>3</experiments>
</comment>
<comment type="interaction">
    <interactant intactId="EBI-2295525">
        <id>O24408</id>
    </interactant>
    <interactant intactId="EBI-3946677">
        <id>Q9ZSY8</id>
        <label>IAA27</label>
    </interactant>
    <organismsDiffer>false</organismsDiffer>
    <experiments>4</experiments>
</comment>
<comment type="interaction">
    <interactant intactId="EBI-2295525">
        <id>O24408</id>
    </interactant>
    <interactant intactId="EBI-3133404">
        <id>Q9XFM0</id>
        <label>IAA28</label>
    </interactant>
    <organismsDiffer>false</organismsDiffer>
    <experiments>7</experiments>
</comment>
<comment type="interaction">
    <interactant intactId="EBI-2295525">
        <id>O24408</id>
    </interactant>
    <interactant intactId="EBI-307174">
        <id>Q38822</id>
        <label>IAA3</label>
    </interactant>
    <organismsDiffer>false</organismsDiffer>
    <experiments>7</experiments>
</comment>
<comment type="interaction">
    <interactant intactId="EBI-2295525">
        <id>O24408</id>
    </interactant>
    <interactant intactId="EBI-3946408">
        <id>Q8H174</id>
        <label>IAA31</label>
    </interactant>
    <organismsDiffer>false</organismsDiffer>
    <experiments>5</experiments>
</comment>
<comment type="interaction">
    <interactant intactId="EBI-2295525">
        <id>O24408</id>
    </interactant>
    <interactant intactId="EBI-632187">
        <id>P33077</id>
        <label>IAA4</label>
    </interactant>
    <organismsDiffer>false</organismsDiffer>
    <experiments>4</experiments>
</comment>
<comment type="interaction">
    <interactant intactId="EBI-2295525">
        <id>O24408</id>
    </interactant>
    <interactant intactId="EBI-1554124">
        <id>Q38824</id>
        <label>IAA6</label>
    </interactant>
    <organismsDiffer>false</organismsDiffer>
    <experiments>3</experiments>
</comment>
<comment type="interaction">
    <interactant intactId="EBI-2295525">
        <id>O24408</id>
    </interactant>
    <interactant intactId="EBI-602959">
        <id>Q38825</id>
        <label>IAA7</label>
    </interactant>
    <organismsDiffer>false</organismsDiffer>
    <experiments>5</experiments>
</comment>
<comment type="interaction">
    <interactant intactId="EBI-2295525">
        <id>O24408</id>
    </interactant>
    <interactant intactId="EBI-632200">
        <id>Q38826</id>
        <label>IAA8</label>
    </interactant>
    <organismsDiffer>false</organismsDiffer>
    <experiments>6</experiments>
</comment>
<comment type="interaction">
    <interactant intactId="EBI-2295525">
        <id>O24408</id>
    </interactant>
    <interactant intactId="EBI-349526">
        <id>Q39023</id>
        <label>MPK3</label>
    </interactant>
    <organismsDiffer>false</organismsDiffer>
    <experiments>3</experiments>
</comment>
<comment type="interaction">
    <interactant intactId="EBI-2295525">
        <id>O24408</id>
    </interactant>
    <interactant intactId="EBI-4426557">
        <id>Q84MB2</id>
        <label>TIFY8</label>
    </interactant>
    <organismsDiffer>false</organismsDiffer>
    <experiments>3</experiments>
</comment>
<comment type="subcellular location">
    <subcellularLocation>
        <location evidence="1">Nucleus</location>
    </subcellularLocation>
</comment>
<comment type="induction">
    <text>By auxin.</text>
</comment>
<comment type="domain">
    <text>The N-terminal half of the protein contains two conserved domains I and II. Domain I includes a slightly degenerated ERF-associated amphiphilic repression (EAR) motif which seems to be involved in the activity of transcriptional repression. Domain II is required for the correct degradation of the protein through the SCF-mediated ubiquitin-proteasome pathway. Interactions between Aux/IAA proteins and auxin response factors (ARFs) occur through their C-terminal dimerization domains III and IV.</text>
</comment>
<comment type="similarity">
    <text evidence="6">Belongs to the Aux/IAA family.</text>
</comment>
<protein>
    <recommendedName>
        <fullName>Auxin-responsive protein IAA18</fullName>
    </recommendedName>
    <alternativeName>
        <fullName>Indoleacetic acid-induced protein 18</fullName>
    </alternativeName>
</protein>
<evidence type="ECO:0000250" key="1"/>
<evidence type="ECO:0000255" key="2">
    <source>
        <dbReference type="PROSITE-ProRule" id="PRU01081"/>
    </source>
</evidence>
<evidence type="ECO:0000256" key="3">
    <source>
        <dbReference type="SAM" id="MobiDB-lite"/>
    </source>
</evidence>
<evidence type="ECO:0000269" key="4">
    <source>
    </source>
</evidence>
<evidence type="ECO:0000269" key="5">
    <source>
    </source>
</evidence>
<evidence type="ECO:0000305" key="6"/>
<keyword id="KW-0927">Auxin signaling pathway</keyword>
<keyword id="KW-0539">Nucleus</keyword>
<keyword id="KW-1185">Reference proteome</keyword>
<keyword id="KW-0678">Repressor</keyword>
<keyword id="KW-0804">Transcription</keyword>
<keyword id="KW-0805">Transcription regulation</keyword>
<dbReference type="EMBL" id="AC015448">
    <property type="protein sequence ID" value="AAF99863.1"/>
    <property type="molecule type" value="Genomic_DNA"/>
</dbReference>
<dbReference type="EMBL" id="CP002684">
    <property type="protein sequence ID" value="AEE32738.1"/>
    <property type="molecule type" value="Genomic_DNA"/>
</dbReference>
<dbReference type="EMBL" id="AF367263">
    <property type="protein sequence ID" value="AAK56252.1"/>
    <property type="molecule type" value="mRNA"/>
</dbReference>
<dbReference type="EMBL" id="AY056062">
    <property type="protein sequence ID" value="AAL06962.1"/>
    <property type="molecule type" value="mRNA"/>
</dbReference>
<dbReference type="EMBL" id="AY088406">
    <property type="protein sequence ID" value="AAM65943.1"/>
    <property type="molecule type" value="mRNA"/>
</dbReference>
<dbReference type="EMBL" id="U49074">
    <property type="protein sequence ID" value="AAB84355.1"/>
    <property type="molecule type" value="mRNA"/>
</dbReference>
<dbReference type="PIR" id="H96558">
    <property type="entry name" value="H96558"/>
</dbReference>
<dbReference type="RefSeq" id="NP_175607.1">
    <property type="nucleotide sequence ID" value="NM_104076.4"/>
</dbReference>
<dbReference type="SMR" id="O24408"/>
<dbReference type="BioGRID" id="26848">
    <property type="interactions" value="44"/>
</dbReference>
<dbReference type="DIP" id="DIP-54845N"/>
<dbReference type="ELM" id="O24408"/>
<dbReference type="FunCoup" id="O24408">
    <property type="interactions" value="1513"/>
</dbReference>
<dbReference type="IntAct" id="O24408">
    <property type="interactions" value="43"/>
</dbReference>
<dbReference type="STRING" id="3702.O24408"/>
<dbReference type="PaxDb" id="3702-AT1G51950.1"/>
<dbReference type="ProteomicsDB" id="228811"/>
<dbReference type="EnsemblPlants" id="AT1G51950.1">
    <property type="protein sequence ID" value="AT1G51950.1"/>
    <property type="gene ID" value="AT1G51950"/>
</dbReference>
<dbReference type="GeneID" id="841623"/>
<dbReference type="Gramene" id="AT1G51950.1">
    <property type="protein sequence ID" value="AT1G51950.1"/>
    <property type="gene ID" value="AT1G51950"/>
</dbReference>
<dbReference type="KEGG" id="ath:AT1G51950"/>
<dbReference type="Araport" id="AT1G51950"/>
<dbReference type="TAIR" id="AT1G51950">
    <property type="gene designation" value="IAA18"/>
</dbReference>
<dbReference type="eggNOG" id="ENOG502QPYY">
    <property type="taxonomic scope" value="Eukaryota"/>
</dbReference>
<dbReference type="HOGENOM" id="CLU_049393_2_2_1"/>
<dbReference type="InParanoid" id="O24408"/>
<dbReference type="OMA" id="ISKERDW"/>
<dbReference type="PhylomeDB" id="O24408"/>
<dbReference type="PRO" id="PR:O24408"/>
<dbReference type="Proteomes" id="UP000006548">
    <property type="component" value="Chromosome 1"/>
</dbReference>
<dbReference type="ExpressionAtlas" id="O24408">
    <property type="expression patterns" value="baseline and differential"/>
</dbReference>
<dbReference type="GO" id="GO:0005634">
    <property type="term" value="C:nucleus"/>
    <property type="evidence" value="ECO:0007669"/>
    <property type="project" value="UniProtKB-SubCell"/>
</dbReference>
<dbReference type="GO" id="GO:0003700">
    <property type="term" value="F:DNA-binding transcription factor activity"/>
    <property type="evidence" value="ECO:0000250"/>
    <property type="project" value="TAIR"/>
</dbReference>
<dbReference type="GO" id="GO:0009734">
    <property type="term" value="P:auxin-activated signaling pathway"/>
    <property type="evidence" value="ECO:0007669"/>
    <property type="project" value="UniProtKB-KW"/>
</dbReference>
<dbReference type="GO" id="GO:0009733">
    <property type="term" value="P:response to auxin"/>
    <property type="evidence" value="ECO:0000304"/>
    <property type="project" value="TAIR"/>
</dbReference>
<dbReference type="FunFam" id="3.10.20.90:FF:000225">
    <property type="entry name" value="Auxin-responsive protein"/>
    <property type="match status" value="1"/>
</dbReference>
<dbReference type="Gene3D" id="3.10.20.90">
    <property type="entry name" value="Phosphatidylinositol 3-kinase Catalytic Subunit, Chain A, domain 1"/>
    <property type="match status" value="1"/>
</dbReference>
<dbReference type="InterPro" id="IPR033389">
    <property type="entry name" value="AUX/IAA_dom"/>
</dbReference>
<dbReference type="InterPro" id="IPR003311">
    <property type="entry name" value="AUX_IAA"/>
</dbReference>
<dbReference type="InterPro" id="IPR053793">
    <property type="entry name" value="PB1-like"/>
</dbReference>
<dbReference type="PANTHER" id="PTHR31734">
    <property type="entry name" value="AUXIN-RESPONSIVE PROTEIN IAA17"/>
    <property type="match status" value="1"/>
</dbReference>
<dbReference type="PANTHER" id="PTHR31734:SF130">
    <property type="entry name" value="AUXIN-RESPONSIVE PROTEIN IAA18"/>
    <property type="match status" value="1"/>
</dbReference>
<dbReference type="Pfam" id="PF02309">
    <property type="entry name" value="AUX_IAA"/>
    <property type="match status" value="1"/>
</dbReference>
<dbReference type="SUPFAM" id="SSF54277">
    <property type="entry name" value="CAD &amp; PB1 domains"/>
    <property type="match status" value="1"/>
</dbReference>
<dbReference type="PROSITE" id="PS51745">
    <property type="entry name" value="PB1"/>
    <property type="match status" value="1"/>
</dbReference>
<name>IAA18_ARATH</name>
<reference key="1">
    <citation type="journal article" date="2000" name="Nature">
        <title>Sequence and analysis of chromosome 1 of the plant Arabidopsis thaliana.</title>
        <authorList>
            <person name="Theologis A."/>
            <person name="Ecker J.R."/>
            <person name="Palm C.J."/>
            <person name="Federspiel N.A."/>
            <person name="Kaul S."/>
            <person name="White O."/>
            <person name="Alonso J."/>
            <person name="Altafi H."/>
            <person name="Araujo R."/>
            <person name="Bowman C.L."/>
            <person name="Brooks S.Y."/>
            <person name="Buehler E."/>
            <person name="Chan A."/>
            <person name="Chao Q."/>
            <person name="Chen H."/>
            <person name="Cheuk R.F."/>
            <person name="Chin C.W."/>
            <person name="Chung M.K."/>
            <person name="Conn L."/>
            <person name="Conway A.B."/>
            <person name="Conway A.R."/>
            <person name="Creasy T.H."/>
            <person name="Dewar K."/>
            <person name="Dunn P."/>
            <person name="Etgu P."/>
            <person name="Feldblyum T.V."/>
            <person name="Feng J.-D."/>
            <person name="Fong B."/>
            <person name="Fujii C.Y."/>
            <person name="Gill J.E."/>
            <person name="Goldsmith A.D."/>
            <person name="Haas B."/>
            <person name="Hansen N.F."/>
            <person name="Hughes B."/>
            <person name="Huizar L."/>
            <person name="Hunter J.L."/>
            <person name="Jenkins J."/>
            <person name="Johnson-Hopson C."/>
            <person name="Khan S."/>
            <person name="Khaykin E."/>
            <person name="Kim C.J."/>
            <person name="Koo H.L."/>
            <person name="Kremenetskaia I."/>
            <person name="Kurtz D.B."/>
            <person name="Kwan A."/>
            <person name="Lam B."/>
            <person name="Langin-Hooper S."/>
            <person name="Lee A."/>
            <person name="Lee J.M."/>
            <person name="Lenz C.A."/>
            <person name="Li J.H."/>
            <person name="Li Y.-P."/>
            <person name="Lin X."/>
            <person name="Liu S.X."/>
            <person name="Liu Z.A."/>
            <person name="Luros J.S."/>
            <person name="Maiti R."/>
            <person name="Marziali A."/>
            <person name="Militscher J."/>
            <person name="Miranda M."/>
            <person name="Nguyen M."/>
            <person name="Nierman W.C."/>
            <person name="Osborne B.I."/>
            <person name="Pai G."/>
            <person name="Peterson J."/>
            <person name="Pham P.K."/>
            <person name="Rizzo M."/>
            <person name="Rooney T."/>
            <person name="Rowley D."/>
            <person name="Sakano H."/>
            <person name="Salzberg S.L."/>
            <person name="Schwartz J.R."/>
            <person name="Shinn P."/>
            <person name="Southwick A.M."/>
            <person name="Sun H."/>
            <person name="Tallon L.J."/>
            <person name="Tambunga G."/>
            <person name="Toriumi M.J."/>
            <person name="Town C.D."/>
            <person name="Utterback T."/>
            <person name="Van Aken S."/>
            <person name="Vaysberg M."/>
            <person name="Vysotskaia V.S."/>
            <person name="Walker M."/>
            <person name="Wu D."/>
            <person name="Yu G."/>
            <person name="Fraser C.M."/>
            <person name="Venter J.C."/>
            <person name="Davis R.W."/>
        </authorList>
    </citation>
    <scope>NUCLEOTIDE SEQUENCE [LARGE SCALE GENOMIC DNA]</scope>
    <source>
        <strain>cv. Columbia</strain>
    </source>
</reference>
<reference key="2">
    <citation type="journal article" date="2017" name="Plant J.">
        <title>Araport11: a complete reannotation of the Arabidopsis thaliana reference genome.</title>
        <authorList>
            <person name="Cheng C.Y."/>
            <person name="Krishnakumar V."/>
            <person name="Chan A.P."/>
            <person name="Thibaud-Nissen F."/>
            <person name="Schobel S."/>
            <person name="Town C.D."/>
        </authorList>
    </citation>
    <scope>GENOME REANNOTATION</scope>
    <source>
        <strain>cv. Columbia</strain>
    </source>
</reference>
<reference key="3">
    <citation type="journal article" date="2003" name="Science">
        <title>Empirical analysis of transcriptional activity in the Arabidopsis genome.</title>
        <authorList>
            <person name="Yamada K."/>
            <person name="Lim J."/>
            <person name="Dale J.M."/>
            <person name="Chen H."/>
            <person name="Shinn P."/>
            <person name="Palm C.J."/>
            <person name="Southwick A.M."/>
            <person name="Wu H.C."/>
            <person name="Kim C.J."/>
            <person name="Nguyen M."/>
            <person name="Pham P.K."/>
            <person name="Cheuk R.F."/>
            <person name="Karlin-Newmann G."/>
            <person name="Liu S.X."/>
            <person name="Lam B."/>
            <person name="Sakano H."/>
            <person name="Wu T."/>
            <person name="Yu G."/>
            <person name="Miranda M."/>
            <person name="Quach H.L."/>
            <person name="Tripp M."/>
            <person name="Chang C.H."/>
            <person name="Lee J.M."/>
            <person name="Toriumi M.J."/>
            <person name="Chan M.M."/>
            <person name="Tang C.C."/>
            <person name="Onodera C.S."/>
            <person name="Deng J.M."/>
            <person name="Akiyama K."/>
            <person name="Ansari Y."/>
            <person name="Arakawa T."/>
            <person name="Banh J."/>
            <person name="Banno F."/>
            <person name="Bowser L."/>
            <person name="Brooks S.Y."/>
            <person name="Carninci P."/>
            <person name="Chao Q."/>
            <person name="Choy N."/>
            <person name="Enju A."/>
            <person name="Goldsmith A.D."/>
            <person name="Gurjal M."/>
            <person name="Hansen N.F."/>
            <person name="Hayashizaki Y."/>
            <person name="Johnson-Hopson C."/>
            <person name="Hsuan V.W."/>
            <person name="Iida K."/>
            <person name="Karnes M."/>
            <person name="Khan S."/>
            <person name="Koesema E."/>
            <person name="Ishida J."/>
            <person name="Jiang P.X."/>
            <person name="Jones T."/>
            <person name="Kawai J."/>
            <person name="Kamiya A."/>
            <person name="Meyers C."/>
            <person name="Nakajima M."/>
            <person name="Narusaka M."/>
            <person name="Seki M."/>
            <person name="Sakurai T."/>
            <person name="Satou M."/>
            <person name="Tamse R."/>
            <person name="Vaysberg M."/>
            <person name="Wallender E.K."/>
            <person name="Wong C."/>
            <person name="Yamamura Y."/>
            <person name="Yuan S."/>
            <person name="Shinozaki K."/>
            <person name="Davis R.W."/>
            <person name="Theologis A."/>
            <person name="Ecker J.R."/>
        </authorList>
    </citation>
    <scope>NUCLEOTIDE SEQUENCE [LARGE SCALE MRNA]</scope>
    <source>
        <strain>cv. Columbia</strain>
    </source>
</reference>
<reference key="4">
    <citation type="submission" date="2002-03" db="EMBL/GenBank/DDBJ databases">
        <title>Full-length cDNA from Arabidopsis thaliana.</title>
        <authorList>
            <person name="Brover V.V."/>
            <person name="Troukhan M.E."/>
            <person name="Alexandrov N.A."/>
            <person name="Lu Y.-P."/>
            <person name="Flavell R.B."/>
            <person name="Feldmann K.A."/>
        </authorList>
    </citation>
    <scope>NUCLEOTIDE SEQUENCE [LARGE SCALE MRNA]</scope>
</reference>
<reference key="5">
    <citation type="journal article" date="1997" name="Proc. Natl. Acad. Sci. U.S.A.">
        <title>Protein-protein interactions among the Aux/IAA proteins.</title>
        <authorList>
            <person name="Kim J."/>
            <person name="Harter K."/>
            <person name="Theologis A."/>
        </authorList>
    </citation>
    <scope>NUCLEOTIDE SEQUENCE [MRNA] OF 31-267</scope>
    <source>
        <strain>cv. Columbia</strain>
    </source>
</reference>
<reference key="6">
    <citation type="journal article" date="2002" name="Plant Mol. Biol.">
        <title>Genetics of Aux/IAA and ARF action in plant growth and development.</title>
        <authorList>
            <person name="Liscum E."/>
            <person name="Reed J.W."/>
        </authorList>
    </citation>
    <scope>GENE FAMILY</scope>
    <scope>NOMENCLATURE</scope>
    <scope>FUNCTION</scope>
</reference>
<reference key="7">
    <citation type="journal article" date="2004" name="Plant Cell">
        <title>Aux/IAA proteins contain a potent transcriptional repression domain.</title>
        <authorList>
            <person name="Tiwari S.B."/>
            <person name="Hagen G."/>
            <person name="Guilfoyle T.J."/>
        </authorList>
    </citation>
    <scope>TRANSCRIPTIONAL REPRESSION DOMAIN</scope>
</reference>
<reference key="8">
    <citation type="journal article" date="2008" name="Science">
        <title>TOPLESS mediates auxin-dependent transcriptional repression during Arabidopsis embryogenesis.</title>
        <authorList>
            <person name="Szemenyei H."/>
            <person name="Hannon M."/>
            <person name="Long J.A."/>
        </authorList>
    </citation>
    <scope>INTERACTION WITH TPL</scope>
</reference>
<sequence>MEGYSRNGEISPKLLDLMIPQERRNWFHDEKNSVFKTEEKKLELKLGPPGEEDDDESMIRHMKKEPKDKSILSLAGKYFSPSSTKTTSHKRTAPGPVVGWPPVRSFRKNLASGSSSKLGNDSTTSNGVTLKNQKCDAAAKTTEPKRQGGMFVKINMYGVPIGRKVDLSAHNSYEQLSFTVDKLFRGLLAAQRDFPSSIEDEKPITGLLDGNGEYTLTYEDNEGDKMLVGDVPWQMFVSSVKRLRVIKTSEISSALTYGNGKQEKMRR</sequence>
<accession>O24408</accession>
<accession>Q8L9I9</accession>
<gene>
    <name type="primary">IAA18</name>
    <name type="ordered locus">At1g51950</name>
    <name type="ORF">T14L22.14</name>
</gene>
<feature type="chain" id="PRO_0000112849" description="Auxin-responsive protein IAA18">
    <location>
        <begin position="1"/>
        <end position="267"/>
    </location>
</feature>
<feature type="domain" description="PB1" evidence="2">
    <location>
        <begin position="149"/>
        <end position="248"/>
    </location>
</feature>
<feature type="region of interest" description="Disordered" evidence="3">
    <location>
        <begin position="81"/>
        <end position="101"/>
    </location>
</feature>
<feature type="short sequence motif" description="EAR-like (transcriptional repression)">
    <location>
        <begin position="42"/>
        <end position="46"/>
    </location>
</feature>
<feature type="sequence conflict" description="In Ref. 4; AAM65943." evidence="6" ref="4">
    <original>W</original>
    <variation>S</variation>
    <location>
        <position position="26"/>
    </location>
</feature>
<feature type="sequence conflict" description="In Ref. 4; AAM65943." evidence="6" ref="4">
    <original>M</original>
    <variation>I</variation>
    <location>
        <position position="58"/>
    </location>
</feature>
<feature type="sequence conflict" description="In Ref. 4; AAM65943." evidence="6" ref="4">
    <original>Y</original>
    <variation>H</variation>
    <location>
        <position position="78"/>
    </location>
</feature>
<feature type="sequence conflict" description="In Ref. 4; AAM65943." evidence="6" ref="4">
    <original>A</original>
    <variation>D</variation>
    <location>
        <position position="137"/>
    </location>
</feature>
<feature type="sequence conflict" description="In Ref. 5; AAB84355." evidence="6" ref="5">
    <location>
        <position position="139"/>
    </location>
</feature>